<accession>P47518</accession>
<reference key="1">
    <citation type="journal article" date="1995" name="Science">
        <title>The minimal gene complement of Mycoplasma genitalium.</title>
        <authorList>
            <person name="Fraser C.M."/>
            <person name="Gocayne J.D."/>
            <person name="White O."/>
            <person name="Adams M.D."/>
            <person name="Clayton R.A."/>
            <person name="Fleischmann R.D."/>
            <person name="Bult C.J."/>
            <person name="Kerlavage A.R."/>
            <person name="Sutton G.G."/>
            <person name="Kelley J.M."/>
            <person name="Fritchman J.L."/>
            <person name="Weidman J.F."/>
            <person name="Small K.V."/>
            <person name="Sandusky M."/>
            <person name="Fuhrmann J.L."/>
            <person name="Nguyen D.T."/>
            <person name="Utterback T.R."/>
            <person name="Saudek D.M."/>
            <person name="Phillips C.A."/>
            <person name="Merrick J.M."/>
            <person name="Tomb J.-F."/>
            <person name="Dougherty B.A."/>
            <person name="Bott K.F."/>
            <person name="Hu P.-C."/>
            <person name="Lucier T.S."/>
            <person name="Peterson S.N."/>
            <person name="Smith H.O."/>
            <person name="Hutchison C.A. III"/>
            <person name="Venter J.C."/>
        </authorList>
    </citation>
    <scope>NUCLEOTIDE SEQUENCE [LARGE SCALE GENOMIC DNA]</scope>
    <source>
        <strain>ATCC 33530 / DSM 19775 / NCTC 10195 / G37</strain>
    </source>
</reference>
<reference key="2">
    <citation type="journal article" date="1993" name="J. Bacteriol.">
        <title>A survey of the Mycoplasma genitalium genome by using random sequencing.</title>
        <authorList>
            <person name="Peterson S.N."/>
            <person name="Hu P.-C."/>
            <person name="Bott K.F."/>
            <person name="Hutchison C.A. III"/>
        </authorList>
    </citation>
    <scope>NUCLEOTIDE SEQUENCE [GENOMIC DNA] OF 144-180</scope>
    <source>
        <strain>ATCC 33530 / DSM 19775 / NCTC 10195 / G37</strain>
    </source>
</reference>
<name>APT_MYCGE</name>
<dbReference type="EC" id="2.4.2.7" evidence="1"/>
<dbReference type="EMBL" id="L43967">
    <property type="protein sequence ID" value="AAC71498.1"/>
    <property type="molecule type" value="Genomic_DNA"/>
</dbReference>
<dbReference type="EMBL" id="U01786">
    <property type="protein sequence ID" value="AAD10608.1"/>
    <property type="molecule type" value="Genomic_DNA"/>
</dbReference>
<dbReference type="PIR" id="E64230">
    <property type="entry name" value="E64230"/>
</dbReference>
<dbReference type="RefSeq" id="WP_010869402.1">
    <property type="nucleotide sequence ID" value="NC_000908.2"/>
</dbReference>
<dbReference type="SMR" id="P47518"/>
<dbReference type="FunCoup" id="P47518">
    <property type="interactions" value="148"/>
</dbReference>
<dbReference type="STRING" id="243273.MG_276"/>
<dbReference type="GeneID" id="88282432"/>
<dbReference type="KEGG" id="mge:MG_276"/>
<dbReference type="eggNOG" id="COG0503">
    <property type="taxonomic scope" value="Bacteria"/>
</dbReference>
<dbReference type="HOGENOM" id="CLU_063339_3_3_14"/>
<dbReference type="InParanoid" id="P47518"/>
<dbReference type="UniPathway" id="UPA00588">
    <property type="reaction ID" value="UER00646"/>
</dbReference>
<dbReference type="Proteomes" id="UP000000807">
    <property type="component" value="Chromosome"/>
</dbReference>
<dbReference type="GO" id="GO:0005737">
    <property type="term" value="C:cytoplasm"/>
    <property type="evidence" value="ECO:0000318"/>
    <property type="project" value="GO_Central"/>
</dbReference>
<dbReference type="GO" id="GO:0002055">
    <property type="term" value="F:adenine binding"/>
    <property type="evidence" value="ECO:0000318"/>
    <property type="project" value="GO_Central"/>
</dbReference>
<dbReference type="GO" id="GO:0003999">
    <property type="term" value="F:adenine phosphoribosyltransferase activity"/>
    <property type="evidence" value="ECO:0000318"/>
    <property type="project" value="GO_Central"/>
</dbReference>
<dbReference type="GO" id="GO:0016208">
    <property type="term" value="F:AMP binding"/>
    <property type="evidence" value="ECO:0000318"/>
    <property type="project" value="GO_Central"/>
</dbReference>
<dbReference type="GO" id="GO:0006168">
    <property type="term" value="P:adenine salvage"/>
    <property type="evidence" value="ECO:0000318"/>
    <property type="project" value="GO_Central"/>
</dbReference>
<dbReference type="GO" id="GO:0044209">
    <property type="term" value="P:AMP salvage"/>
    <property type="evidence" value="ECO:0000318"/>
    <property type="project" value="GO_Central"/>
</dbReference>
<dbReference type="GO" id="GO:0006166">
    <property type="term" value="P:purine ribonucleoside salvage"/>
    <property type="evidence" value="ECO:0007669"/>
    <property type="project" value="UniProtKB-KW"/>
</dbReference>
<dbReference type="CDD" id="cd06223">
    <property type="entry name" value="PRTases_typeI"/>
    <property type="match status" value="1"/>
</dbReference>
<dbReference type="FunFam" id="3.40.50.2020:FF:000004">
    <property type="entry name" value="Adenine phosphoribosyltransferase"/>
    <property type="match status" value="1"/>
</dbReference>
<dbReference type="Gene3D" id="3.40.50.2020">
    <property type="match status" value="1"/>
</dbReference>
<dbReference type="HAMAP" id="MF_00004">
    <property type="entry name" value="Aden_phosphoribosyltr"/>
    <property type="match status" value="1"/>
</dbReference>
<dbReference type="InterPro" id="IPR005764">
    <property type="entry name" value="Ade_phspho_trans"/>
</dbReference>
<dbReference type="InterPro" id="IPR000836">
    <property type="entry name" value="PRibTrfase_dom"/>
</dbReference>
<dbReference type="InterPro" id="IPR029057">
    <property type="entry name" value="PRTase-like"/>
</dbReference>
<dbReference type="InterPro" id="IPR050054">
    <property type="entry name" value="UPRTase/APRTase"/>
</dbReference>
<dbReference type="NCBIfam" id="TIGR01090">
    <property type="entry name" value="apt"/>
    <property type="match status" value="1"/>
</dbReference>
<dbReference type="NCBIfam" id="NF002636">
    <property type="entry name" value="PRK02304.1-5"/>
    <property type="match status" value="1"/>
</dbReference>
<dbReference type="PANTHER" id="PTHR32315">
    <property type="entry name" value="ADENINE PHOSPHORIBOSYLTRANSFERASE"/>
    <property type="match status" value="1"/>
</dbReference>
<dbReference type="PANTHER" id="PTHR32315:SF3">
    <property type="entry name" value="ADENINE PHOSPHORIBOSYLTRANSFERASE"/>
    <property type="match status" value="1"/>
</dbReference>
<dbReference type="Pfam" id="PF00156">
    <property type="entry name" value="Pribosyltran"/>
    <property type="match status" value="1"/>
</dbReference>
<dbReference type="SUPFAM" id="SSF53271">
    <property type="entry name" value="PRTase-like"/>
    <property type="match status" value="1"/>
</dbReference>
<dbReference type="PROSITE" id="PS00103">
    <property type="entry name" value="PUR_PYR_PR_TRANSFER"/>
    <property type="match status" value="1"/>
</dbReference>
<protein>
    <recommendedName>
        <fullName evidence="1">Adenine phosphoribosyltransferase</fullName>
        <shortName evidence="1">APRT</shortName>
        <ecNumber evidence="1">2.4.2.7</ecNumber>
    </recommendedName>
</protein>
<evidence type="ECO:0000255" key="1">
    <source>
        <dbReference type="HAMAP-Rule" id="MF_00004"/>
    </source>
</evidence>
<feature type="chain" id="PRO_0000149411" description="Adenine phosphoribosyltransferase">
    <location>
        <begin position="1"/>
        <end position="180"/>
    </location>
</feature>
<keyword id="KW-0963">Cytoplasm</keyword>
<keyword id="KW-0328">Glycosyltransferase</keyword>
<keyword id="KW-0660">Purine salvage</keyword>
<keyword id="KW-1185">Reference proteome</keyword>
<keyword id="KW-0808">Transferase</keyword>
<sequence length="180" mass="19976">MDQNFKLLDQAIKRFENFPNQGTLFYDITPVFSNPQLFNFVLTQMAQFIKAINAEAIVCPEARGFIFGGALASKTQLPLVLVRKANKLPGQLISASYDLEYRKHAVLEMSTTSLIQANNAKRCVIVDDVLATAGTVAAIDQLLKQLNGETVGYCFLIELKKLNGKAKLQPNVVSKILLHY</sequence>
<organism>
    <name type="scientific">Mycoplasma genitalium (strain ATCC 33530 / DSM 19775 / NCTC 10195 / G37)</name>
    <name type="common">Mycoplasmoides genitalium</name>
    <dbReference type="NCBI Taxonomy" id="243273"/>
    <lineage>
        <taxon>Bacteria</taxon>
        <taxon>Bacillati</taxon>
        <taxon>Mycoplasmatota</taxon>
        <taxon>Mycoplasmoidales</taxon>
        <taxon>Mycoplasmoidaceae</taxon>
        <taxon>Mycoplasmoides</taxon>
    </lineage>
</organism>
<gene>
    <name evidence="1" type="primary">apt</name>
    <name type="ordered locus">MG276</name>
</gene>
<comment type="function">
    <text evidence="1">Catalyzes a salvage reaction resulting in the formation of AMP, that is energically less costly than de novo synthesis.</text>
</comment>
<comment type="catalytic activity">
    <reaction evidence="1">
        <text>AMP + diphosphate = 5-phospho-alpha-D-ribose 1-diphosphate + adenine</text>
        <dbReference type="Rhea" id="RHEA:16609"/>
        <dbReference type="ChEBI" id="CHEBI:16708"/>
        <dbReference type="ChEBI" id="CHEBI:33019"/>
        <dbReference type="ChEBI" id="CHEBI:58017"/>
        <dbReference type="ChEBI" id="CHEBI:456215"/>
        <dbReference type="EC" id="2.4.2.7"/>
    </reaction>
</comment>
<comment type="pathway">
    <text evidence="1">Purine metabolism; AMP biosynthesis via salvage pathway; AMP from adenine: step 1/1.</text>
</comment>
<comment type="subunit">
    <text evidence="1">Homodimer.</text>
</comment>
<comment type="subcellular location">
    <subcellularLocation>
        <location evidence="1">Cytoplasm</location>
    </subcellularLocation>
</comment>
<comment type="similarity">
    <text evidence="1">Belongs to the purine/pyrimidine phosphoribosyltransferase family.</text>
</comment>
<proteinExistence type="inferred from homology"/>